<protein>
    <recommendedName>
        <fullName evidence="1">UPF0149 protein YgfB</fullName>
    </recommendedName>
</protein>
<sequence>MSIQNEMPGYNEMNRFLNQQGAGLTPAEMHGLISGMICGGNNDSSWQPLLHDLTNEGLAFGHELAQALRKMHAATSDALEDDGFLFQLYLPEGDDVSVFDRADALAGWVNHFLLGLGVTQPKLDKVTGETGEAIDDLRNIAQLGYDESEDQEELEMSLEEIIEYVRVAALLCHDTFTRQQPTAPEVRKPTLH</sequence>
<gene>
    <name evidence="1" type="primary">ygfB</name>
    <name type="ordered locus">SeAg_B3218</name>
</gene>
<name>YGFB_SALA4</name>
<feature type="chain" id="PRO_1000120478" description="UPF0149 protein YgfB">
    <location>
        <begin position="1"/>
        <end position="192"/>
    </location>
</feature>
<organism>
    <name type="scientific">Salmonella agona (strain SL483)</name>
    <dbReference type="NCBI Taxonomy" id="454166"/>
    <lineage>
        <taxon>Bacteria</taxon>
        <taxon>Pseudomonadati</taxon>
        <taxon>Pseudomonadota</taxon>
        <taxon>Gammaproteobacteria</taxon>
        <taxon>Enterobacterales</taxon>
        <taxon>Enterobacteriaceae</taxon>
        <taxon>Salmonella</taxon>
    </lineage>
</organism>
<accession>B5F5I5</accession>
<evidence type="ECO:0000255" key="1">
    <source>
        <dbReference type="HAMAP-Rule" id="MF_00346"/>
    </source>
</evidence>
<comment type="similarity">
    <text evidence="1">Belongs to the UPF0149 family.</text>
</comment>
<reference key="1">
    <citation type="journal article" date="2011" name="J. Bacteriol.">
        <title>Comparative genomics of 28 Salmonella enterica isolates: evidence for CRISPR-mediated adaptive sublineage evolution.</title>
        <authorList>
            <person name="Fricke W.F."/>
            <person name="Mammel M.K."/>
            <person name="McDermott P.F."/>
            <person name="Tartera C."/>
            <person name="White D.G."/>
            <person name="Leclerc J.E."/>
            <person name="Ravel J."/>
            <person name="Cebula T.A."/>
        </authorList>
    </citation>
    <scope>NUCLEOTIDE SEQUENCE [LARGE SCALE GENOMIC DNA]</scope>
    <source>
        <strain>SL483</strain>
    </source>
</reference>
<proteinExistence type="inferred from homology"/>
<dbReference type="EMBL" id="CP001138">
    <property type="protein sequence ID" value="ACH50312.1"/>
    <property type="molecule type" value="Genomic_DNA"/>
</dbReference>
<dbReference type="SMR" id="B5F5I5"/>
<dbReference type="KEGG" id="sea:SeAg_B3218"/>
<dbReference type="HOGENOM" id="CLU_085336_1_0_6"/>
<dbReference type="Proteomes" id="UP000008819">
    <property type="component" value="Chromosome"/>
</dbReference>
<dbReference type="GO" id="GO:0005829">
    <property type="term" value="C:cytosol"/>
    <property type="evidence" value="ECO:0007669"/>
    <property type="project" value="TreeGrafter"/>
</dbReference>
<dbReference type="FunFam" id="1.20.120.740:FF:000001">
    <property type="entry name" value="UPF0149 protein YgfB"/>
    <property type="match status" value="1"/>
</dbReference>
<dbReference type="Gene3D" id="1.20.120.740">
    <property type="entry name" value="YgfB uncharacterised protein family UPF0149, PF03695"/>
    <property type="match status" value="1"/>
</dbReference>
<dbReference type="HAMAP" id="MF_00346">
    <property type="entry name" value="UPF0149"/>
    <property type="match status" value="1"/>
</dbReference>
<dbReference type="InterPro" id="IPR011978">
    <property type="entry name" value="YgfB-like"/>
</dbReference>
<dbReference type="InterPro" id="IPR036255">
    <property type="entry name" value="YgfB-like_sf"/>
</dbReference>
<dbReference type="NCBIfam" id="NF002477">
    <property type="entry name" value="PRK01736.1"/>
    <property type="match status" value="1"/>
</dbReference>
<dbReference type="NCBIfam" id="TIGR02292">
    <property type="entry name" value="ygfB_yecA"/>
    <property type="match status" value="1"/>
</dbReference>
<dbReference type="PANTHER" id="PTHR37528">
    <property type="entry name" value="UPF0149 PROTEIN YGFB"/>
    <property type="match status" value="1"/>
</dbReference>
<dbReference type="PANTHER" id="PTHR37528:SF1">
    <property type="entry name" value="UPF0149 PROTEIN YGFB"/>
    <property type="match status" value="1"/>
</dbReference>
<dbReference type="Pfam" id="PF03695">
    <property type="entry name" value="UPF0149"/>
    <property type="match status" value="1"/>
</dbReference>
<dbReference type="SUPFAM" id="SSF101327">
    <property type="entry name" value="YgfB-like"/>
    <property type="match status" value="1"/>
</dbReference>